<proteinExistence type="inferred from homology"/>
<organism>
    <name type="scientific">Trichormus variabilis (strain ATCC 29413 / PCC 7937)</name>
    <name type="common">Anabaena variabilis</name>
    <dbReference type="NCBI Taxonomy" id="240292"/>
    <lineage>
        <taxon>Bacteria</taxon>
        <taxon>Bacillati</taxon>
        <taxon>Cyanobacteriota</taxon>
        <taxon>Cyanophyceae</taxon>
        <taxon>Nostocales</taxon>
        <taxon>Nostocaceae</taxon>
        <taxon>Trichormus</taxon>
    </lineage>
</organism>
<sequence length="299" mass="34969">MSNDIDLIKRLGPSAMDQIMLYLAFSAMRTSGHRHGAFLDAAATAAKCAIYMTYLEQGQNLRMTGHLHHLEPKRVKIIVEEVRQALMEGKLLKTLGSQEPRYLIQFPYVWMEQYPWIPGRSRIPGTSLTSEEKRQIEHKLPSNLPDAQLVTSFEFLELIEFLHKRSQEDLPPEHRMELSEALAEHIKRRLLYSGTVTRIDSPWGMPFYALTRPFYAPADDQERTYIMVEDTARYFRMMKDWAEKRPNAMRALEELDVPPERWDEAMQELDEIIRTWADKYHQVGGIPMILQMVFGRKED</sequence>
<accession>Q9F5Y3</accession>
<accession>Q3MGV2</accession>
<keyword id="KW-0010">Activator</keyword>
<keyword id="KW-1015">Disulfide bond</keyword>
<keyword id="KW-0238">DNA-binding</keyword>
<keyword id="KW-0364">Heterocyst</keyword>
<keyword id="KW-0378">Hydrolase</keyword>
<keyword id="KW-0645">Protease</keyword>
<keyword id="KW-0720">Serine protease</keyword>
<keyword id="KW-0804">Transcription</keyword>
<keyword id="KW-0805">Transcription regulation</keyword>
<feature type="chain" id="PRO_0000208479" description="DNA-binding transcriptional activator HetR">
    <location>
        <begin position="1"/>
        <end position="299"/>
    </location>
</feature>
<feature type="active site" evidence="1">
    <location>
        <position position="152"/>
    </location>
</feature>
<feature type="disulfide bond" description="Interchain" evidence="1">
    <location>
        <position position="48"/>
    </location>
</feature>
<feature type="sequence conflict" description="In Ref. 1; AAG24634." evidence="3" ref="1">
    <original>S</original>
    <variation>V</variation>
    <location>
        <position position="2"/>
    </location>
</feature>
<feature type="sequence conflict" description="In Ref. 1; AAG24634." evidence="3" ref="1">
    <original>S</original>
    <variation>G</variation>
    <location>
        <position position="14"/>
    </location>
</feature>
<name>HETR_TRIV2</name>
<comment type="function">
    <text evidence="1 4">Controls heterocyst differentiation. Dimerization is required for DNA-binding. Has both a protease and a DNA-binding activity.</text>
</comment>
<comment type="subunit">
    <text evidence="1">Homodimer; disulfide-linked.</text>
</comment>
<comment type="disruption phenotype">
    <text evidence="2">Mutant strains no longer develop heterocysts when grown in medium without combined nitrogen. Aerobically growing cells do not express nitrogenase, and do not grow in the absence of exogenous nitrogen. Cells grow normally under anaerobic conditions, even in the absence of nitrogen.</text>
</comment>
<comment type="similarity">
    <text evidence="1">Belongs to the peptidase S48 family.</text>
</comment>
<evidence type="ECO:0000255" key="1">
    <source>
        <dbReference type="HAMAP-Rule" id="MF_00781"/>
    </source>
</evidence>
<evidence type="ECO:0000269" key="2">
    <source>
    </source>
</evidence>
<evidence type="ECO:0000305" key="3"/>
<evidence type="ECO:0000305" key="4">
    <source>
    </source>
</evidence>
<reference key="1">
    <citation type="journal article" date="2002" name="Biochim. Biophys. Acta">
        <title>Molecular cloning and characterization of hetR genes from filamentous cyanobacteria.</title>
        <authorList>
            <person name="Schiefer W."/>
            <person name="Schuetz K."/>
            <person name="Hachtel W."/>
            <person name="Happe T."/>
        </authorList>
    </citation>
    <scope>NUCLEOTIDE SEQUENCE [GENOMIC DNA]</scope>
    <scope>FUNCTION</scope>
    <scope>DISRUPTION PHENOTYPE</scope>
    <source>
        <strain>ATCC 29413 / PCC 7937</strain>
    </source>
</reference>
<reference key="2">
    <citation type="journal article" date="2014" name="Stand. Genomic Sci.">
        <title>Complete genome sequence of Anabaena variabilis ATCC 29413.</title>
        <authorList>
            <person name="Thiel T."/>
            <person name="Pratte B.S."/>
            <person name="Zhong J."/>
            <person name="Goodwin L."/>
            <person name="Copeland A."/>
            <person name="Lucas S."/>
            <person name="Han C."/>
            <person name="Pitluck S."/>
            <person name="Land M.L."/>
            <person name="Kyrpides N.C."/>
            <person name="Woyke T."/>
        </authorList>
    </citation>
    <scope>NUCLEOTIDE SEQUENCE [LARGE SCALE GENOMIC DNA]</scope>
    <source>
        <strain>ATCC 29413 / PCC 7937</strain>
    </source>
</reference>
<dbReference type="EC" id="3.4.21.-" evidence="1"/>
<dbReference type="EMBL" id="AF301157">
    <property type="protein sequence ID" value="AAG24634.2"/>
    <property type="molecule type" value="Genomic_DNA"/>
</dbReference>
<dbReference type="EMBL" id="CP000117">
    <property type="protein sequence ID" value="ABA19784.1"/>
    <property type="molecule type" value="Genomic_DNA"/>
</dbReference>
<dbReference type="RefSeq" id="WP_010996495.1">
    <property type="nucleotide sequence ID" value="NC_007413.1"/>
</dbReference>
<dbReference type="SMR" id="Q9F5Y3"/>
<dbReference type="STRING" id="240292.Ava_0158"/>
<dbReference type="MEROPS" id="S48.001"/>
<dbReference type="GeneID" id="58722805"/>
<dbReference type="KEGG" id="ava:Ava_0158"/>
<dbReference type="eggNOG" id="ENOG502Z96Q">
    <property type="taxonomic scope" value="Bacteria"/>
</dbReference>
<dbReference type="HOGENOM" id="CLU_926376_0_0_3"/>
<dbReference type="Proteomes" id="UP000002533">
    <property type="component" value="Chromosome"/>
</dbReference>
<dbReference type="GO" id="GO:0003677">
    <property type="term" value="F:DNA binding"/>
    <property type="evidence" value="ECO:0007669"/>
    <property type="project" value="UniProtKB-UniRule"/>
</dbReference>
<dbReference type="GO" id="GO:0004252">
    <property type="term" value="F:serine-type endopeptidase activity"/>
    <property type="evidence" value="ECO:0007669"/>
    <property type="project" value="UniProtKB-UniRule"/>
</dbReference>
<dbReference type="GO" id="GO:0043158">
    <property type="term" value="P:heterocyst development"/>
    <property type="evidence" value="ECO:0007669"/>
    <property type="project" value="UniProtKB-UniRule"/>
</dbReference>
<dbReference type="GO" id="GO:0006508">
    <property type="term" value="P:proteolysis"/>
    <property type="evidence" value="ECO:0007669"/>
    <property type="project" value="UniProtKB-KW"/>
</dbReference>
<dbReference type="Gene3D" id="6.10.250.2740">
    <property type="match status" value="1"/>
</dbReference>
<dbReference type="Gene3D" id="1.10.10.1670">
    <property type="entry name" value="HetR, flap domain"/>
    <property type="match status" value="1"/>
</dbReference>
<dbReference type="Gene3D" id="1.10.10.1680">
    <property type="entry name" value="HetR, N-terminal DNA-binding domain"/>
    <property type="match status" value="1"/>
</dbReference>
<dbReference type="HAMAP" id="MF_00781">
    <property type="entry name" value="HetR"/>
    <property type="match status" value="1"/>
</dbReference>
<dbReference type="InterPro" id="IPR040949">
    <property type="entry name" value="HetR_C"/>
</dbReference>
<dbReference type="InterPro" id="IPR041936">
    <property type="entry name" value="HetR_DNA-bd_N"/>
</dbReference>
<dbReference type="InterPro" id="IPR041935">
    <property type="entry name" value="HetR_flap"/>
</dbReference>
<dbReference type="InterPro" id="IPR005319">
    <property type="entry name" value="Pept_S48_HetR"/>
</dbReference>
<dbReference type="NCBIfam" id="NF009718">
    <property type="entry name" value="PRK13245.1"/>
    <property type="match status" value="1"/>
</dbReference>
<dbReference type="Pfam" id="PF18460">
    <property type="entry name" value="HetR_C"/>
    <property type="match status" value="1"/>
</dbReference>
<dbReference type="Pfam" id="PF03574">
    <property type="entry name" value="Peptidase_S48"/>
    <property type="match status" value="1"/>
</dbReference>
<protein>
    <recommendedName>
        <fullName evidence="1">DNA-binding transcriptional activator HetR</fullName>
        <ecNumber evidence="1">3.4.21.-</ecNumber>
    </recommendedName>
    <alternativeName>
        <fullName evidence="1">Heterocyst differentiation control protein</fullName>
    </alternativeName>
</protein>
<gene>
    <name evidence="1" type="primary">hetR</name>
    <name type="ordered locus">Ava_0158</name>
</gene>